<proteinExistence type="inferred from homology"/>
<protein>
    <recommendedName>
        <fullName evidence="2">Protein-ADP-ribose hydrolase</fullName>
        <ecNumber evidence="2">3.2.1.-</ecNumber>
    </recommendedName>
</protein>
<reference key="1">
    <citation type="journal article" date="2004" name="Proc. Natl. Acad. Sci. U.S.A.">
        <title>Complete genomes of two clinical Staphylococcus aureus strains: evidence for the rapid evolution of virulence and drug resistance.</title>
        <authorList>
            <person name="Holden M.T.G."/>
            <person name="Feil E.J."/>
            <person name="Lindsay J.A."/>
            <person name="Peacock S.J."/>
            <person name="Day N.P.J."/>
            <person name="Enright M.C."/>
            <person name="Foster T.J."/>
            <person name="Moore C.E."/>
            <person name="Hurst L."/>
            <person name="Atkin R."/>
            <person name="Barron A."/>
            <person name="Bason N."/>
            <person name="Bentley S.D."/>
            <person name="Chillingworth C."/>
            <person name="Chillingworth T."/>
            <person name="Churcher C."/>
            <person name="Clark L."/>
            <person name="Corton C."/>
            <person name="Cronin A."/>
            <person name="Doggett J."/>
            <person name="Dowd L."/>
            <person name="Feltwell T."/>
            <person name="Hance Z."/>
            <person name="Harris B."/>
            <person name="Hauser H."/>
            <person name="Holroyd S."/>
            <person name="Jagels K."/>
            <person name="James K.D."/>
            <person name="Lennard N."/>
            <person name="Line A."/>
            <person name="Mayes R."/>
            <person name="Moule S."/>
            <person name="Mungall K."/>
            <person name="Ormond D."/>
            <person name="Quail M.A."/>
            <person name="Rabbinowitsch E."/>
            <person name="Rutherford K.M."/>
            <person name="Sanders M."/>
            <person name="Sharp S."/>
            <person name="Simmonds M."/>
            <person name="Stevens K."/>
            <person name="Whitehead S."/>
            <person name="Barrell B.G."/>
            <person name="Spratt B.G."/>
            <person name="Parkhill J."/>
        </authorList>
    </citation>
    <scope>NUCLEOTIDE SEQUENCE [LARGE SCALE GENOMIC DNA]</scope>
    <source>
        <strain>MSSA476</strain>
    </source>
</reference>
<organism>
    <name type="scientific">Staphylococcus aureus (strain MSSA476)</name>
    <dbReference type="NCBI Taxonomy" id="282459"/>
    <lineage>
        <taxon>Bacteria</taxon>
        <taxon>Bacillati</taxon>
        <taxon>Bacillota</taxon>
        <taxon>Bacilli</taxon>
        <taxon>Bacillales</taxon>
        <taxon>Staphylococcaceae</taxon>
        <taxon>Staphylococcus</taxon>
    </lineage>
</organism>
<evidence type="ECO:0000250" key="1">
    <source>
        <dbReference type="UniProtKB" id="P0DN70"/>
    </source>
</evidence>
<evidence type="ECO:0000250" key="2">
    <source>
        <dbReference type="UniProtKB" id="P67343"/>
    </source>
</evidence>
<evidence type="ECO:0000255" key="3">
    <source>
        <dbReference type="PROSITE-ProRule" id="PRU00490"/>
    </source>
</evidence>
<evidence type="ECO:0000305" key="4"/>
<feature type="chain" id="PRO_0000089212" description="Protein-ADP-ribose hydrolase">
    <location>
        <begin position="1"/>
        <end position="266"/>
    </location>
</feature>
<feature type="domain" description="Macro" evidence="3">
    <location>
        <begin position="74"/>
        <end position="265"/>
    </location>
</feature>
<feature type="binding site" evidence="1">
    <location>
        <position position="93"/>
    </location>
    <ligand>
        <name>ADP-D-ribose</name>
        <dbReference type="ChEBI" id="CHEBI:57967"/>
    </ligand>
</feature>
<feature type="binding site" evidence="1">
    <location>
        <position position="94"/>
    </location>
    <ligand>
        <name>ADP-D-ribose</name>
        <dbReference type="ChEBI" id="CHEBI:57967"/>
    </ligand>
</feature>
<feature type="binding site" evidence="1">
    <location>
        <position position="107"/>
    </location>
    <ligand>
        <name>ADP-D-ribose</name>
        <dbReference type="ChEBI" id="CHEBI:57967"/>
    </ligand>
</feature>
<feature type="binding site" evidence="1">
    <location>
        <position position="113"/>
    </location>
    <ligand>
        <name>Zn(2+)</name>
        <dbReference type="ChEBI" id="CHEBI:29105"/>
    </ligand>
</feature>
<feature type="binding site" evidence="1">
    <location>
        <position position="118"/>
    </location>
    <ligand>
        <name>Zn(2+)</name>
        <dbReference type="ChEBI" id="CHEBI:29105"/>
    </ligand>
</feature>
<feature type="binding site" evidence="1">
    <location>
        <position position="120"/>
    </location>
    <ligand>
        <name>ADP-D-ribose</name>
        <dbReference type="ChEBI" id="CHEBI:57967"/>
    </ligand>
</feature>
<feature type="binding site" evidence="1">
    <location>
        <position position="120"/>
    </location>
    <ligand>
        <name>Zn(2+)</name>
        <dbReference type="ChEBI" id="CHEBI:29105"/>
    </ligand>
</feature>
<feature type="binding site" evidence="1">
    <location>
        <position position="121"/>
    </location>
    <ligand>
        <name>ADP-D-ribose</name>
        <dbReference type="ChEBI" id="CHEBI:57967"/>
    </ligand>
</feature>
<feature type="binding site" evidence="1">
    <location>
        <position position="122"/>
    </location>
    <ligand>
        <name>ADP-D-ribose</name>
        <dbReference type="ChEBI" id="CHEBI:57967"/>
    </ligand>
</feature>
<feature type="binding site" evidence="1">
    <location>
        <position position="212"/>
    </location>
    <ligand>
        <name>ADP-D-ribose</name>
        <dbReference type="ChEBI" id="CHEBI:57967"/>
    </ligand>
</feature>
<feature type="binding site" evidence="1">
    <location>
        <position position="213"/>
    </location>
    <ligand>
        <name>ADP-D-ribose</name>
        <dbReference type="ChEBI" id="CHEBI:57967"/>
    </ligand>
</feature>
<feature type="binding site" evidence="1">
    <location>
        <position position="214"/>
    </location>
    <ligand>
        <name>ADP-D-ribose</name>
        <dbReference type="ChEBI" id="CHEBI:57967"/>
    </ligand>
</feature>
<feature type="binding site" evidence="1">
    <location>
        <position position="216"/>
    </location>
    <ligand>
        <name>ADP-D-ribose</name>
        <dbReference type="ChEBI" id="CHEBI:57967"/>
    </ligand>
</feature>
<comment type="function">
    <text evidence="2">ADP-ribosylhydrolase that specifically reverses the SirTM-mediated mono-ADP-ribosylation at an asparatate residue of GcvH-L, by releasing ADP-ribose from the target protein (By similarity). May play a role in the regulation of the response to host-induced oxidative stress (By similarity).</text>
</comment>
<comment type="catalytic activity">
    <reaction evidence="2">
        <text>4-O-(ADP-D-ribosyl)-L-aspartyl-[protein] + H2O = L-aspartyl-[protein] + ADP-D-ribose + H(+)</text>
        <dbReference type="Rhea" id="RHEA:54428"/>
        <dbReference type="Rhea" id="RHEA-COMP:9867"/>
        <dbReference type="Rhea" id="RHEA-COMP:13832"/>
        <dbReference type="ChEBI" id="CHEBI:15377"/>
        <dbReference type="ChEBI" id="CHEBI:15378"/>
        <dbReference type="ChEBI" id="CHEBI:29961"/>
        <dbReference type="ChEBI" id="CHEBI:57967"/>
        <dbReference type="ChEBI" id="CHEBI:138102"/>
    </reaction>
    <physiologicalReaction direction="left-to-right" evidence="2">
        <dbReference type="Rhea" id="RHEA:54429"/>
    </physiologicalReaction>
</comment>
<comment type="cofactor">
    <cofactor evidence="2">
        <name>Zn(2+)</name>
        <dbReference type="ChEBI" id="CHEBI:29105"/>
    </cofactor>
    <text evidence="2">Binds 1 Zn(2+) ion per subunit.</text>
</comment>
<comment type="similarity">
    <text evidence="4">Belongs to the MacroD-type family. Zn-Macro subfamily.</text>
</comment>
<name>ADPRH_STAAS</name>
<gene>
    <name type="ordered locus">SAS0302</name>
</gene>
<keyword id="KW-0326">Glycosidase</keyword>
<keyword id="KW-0378">Hydrolase</keyword>
<keyword id="KW-0479">Metal-binding</keyword>
<keyword id="KW-0862">Zinc</keyword>
<sequence>METLKSNKARLEYLINDMHRERNDNDVLVMPSSFEDLWELYRGLANVRPALPVSDEYLAVQDAMLSDLNRQHVTDLKDLKPIKGDNIFVWQGDITTLKIDAIVNAANSRFLGCMQANHDCIDNIIHTKAGVQVRLDCAEIIRQQGRNEGVGKAKITRGYNLPAKYIIHTVGPQIRRLPVSKMNQDLLAKCYLSCLKLADQHSLNHVAFCCISTGVFAFPQDEAAEIAVRTVESYLKETNSTLKVVFNVFTDKDLQLYKEAFNRDAE</sequence>
<accession>Q6GCE6</accession>
<dbReference type="EC" id="3.2.1.-" evidence="2"/>
<dbReference type="EMBL" id="BX571857">
    <property type="protein sequence ID" value="CAG42073.1"/>
    <property type="molecule type" value="Genomic_DNA"/>
</dbReference>
<dbReference type="RefSeq" id="WP_000449060.1">
    <property type="nucleotide sequence ID" value="NC_002953.3"/>
</dbReference>
<dbReference type="SMR" id="Q6GCE6"/>
<dbReference type="KEGG" id="sas:SAS0302"/>
<dbReference type="HOGENOM" id="CLU_046550_2_1_9"/>
<dbReference type="GO" id="GO:0016798">
    <property type="term" value="F:hydrolase activity, acting on glycosyl bonds"/>
    <property type="evidence" value="ECO:0007669"/>
    <property type="project" value="UniProtKB-KW"/>
</dbReference>
<dbReference type="CDD" id="cd02908">
    <property type="entry name" value="Macro_OAADPr_deacetylase"/>
    <property type="match status" value="1"/>
</dbReference>
<dbReference type="FunFam" id="3.40.220.10:FF:000018">
    <property type="entry name" value="Protein-ADP-ribose hydrolase"/>
    <property type="match status" value="1"/>
</dbReference>
<dbReference type="Gene3D" id="3.40.220.10">
    <property type="entry name" value="Leucine Aminopeptidase, subunit E, domain 1"/>
    <property type="match status" value="1"/>
</dbReference>
<dbReference type="InterPro" id="IPR002589">
    <property type="entry name" value="Macro_dom"/>
</dbReference>
<dbReference type="InterPro" id="IPR043472">
    <property type="entry name" value="Macro_dom-like"/>
</dbReference>
<dbReference type="NCBIfam" id="NF003163">
    <property type="entry name" value="PRK04143.1"/>
    <property type="match status" value="1"/>
</dbReference>
<dbReference type="PANTHER" id="PTHR11106">
    <property type="entry name" value="GANGLIOSIDE INDUCED DIFFERENTIATION ASSOCIATED PROTEIN 2-RELATED"/>
    <property type="match status" value="1"/>
</dbReference>
<dbReference type="PANTHER" id="PTHR11106:SF27">
    <property type="entry name" value="MACRO DOMAIN-CONTAINING PROTEIN"/>
    <property type="match status" value="1"/>
</dbReference>
<dbReference type="Pfam" id="PF01661">
    <property type="entry name" value="Macro"/>
    <property type="match status" value="1"/>
</dbReference>
<dbReference type="SMART" id="SM00506">
    <property type="entry name" value="A1pp"/>
    <property type="match status" value="1"/>
</dbReference>
<dbReference type="SUPFAM" id="SSF52949">
    <property type="entry name" value="Macro domain-like"/>
    <property type="match status" value="1"/>
</dbReference>
<dbReference type="PROSITE" id="PS51154">
    <property type="entry name" value="MACRO"/>
    <property type="match status" value="1"/>
</dbReference>